<reference key="1">
    <citation type="journal article" date="2004" name="Science">
        <title>The genomic sequence of the accidental pathogen Legionella pneumophila.</title>
        <authorList>
            <person name="Chien M."/>
            <person name="Morozova I."/>
            <person name="Shi S."/>
            <person name="Sheng H."/>
            <person name="Chen J."/>
            <person name="Gomez S.M."/>
            <person name="Asamani G."/>
            <person name="Hill K."/>
            <person name="Nuara J."/>
            <person name="Feder M."/>
            <person name="Rineer J."/>
            <person name="Greenberg J.J."/>
            <person name="Steshenko V."/>
            <person name="Park S.H."/>
            <person name="Zhao B."/>
            <person name="Teplitskaya E."/>
            <person name="Edwards J.R."/>
            <person name="Pampou S."/>
            <person name="Georghiou A."/>
            <person name="Chou I.-C."/>
            <person name="Iannuccilli W."/>
            <person name="Ulz M.E."/>
            <person name="Kim D.H."/>
            <person name="Geringer-Sameth A."/>
            <person name="Goldsberry C."/>
            <person name="Morozov P."/>
            <person name="Fischer S.G."/>
            <person name="Segal G."/>
            <person name="Qu X."/>
            <person name="Rzhetsky A."/>
            <person name="Zhang P."/>
            <person name="Cayanis E."/>
            <person name="De Jong P.J."/>
            <person name="Ju J."/>
            <person name="Kalachikov S."/>
            <person name="Shuman H.A."/>
            <person name="Russo J.J."/>
        </authorList>
    </citation>
    <scope>NUCLEOTIDE SEQUENCE [LARGE SCALE GENOMIC DNA]</scope>
    <source>
        <strain>Philadelphia 1 / ATCC 33152 / DSM 7513</strain>
    </source>
</reference>
<gene>
    <name evidence="2" type="primary">rpsL</name>
    <name type="ordered locus">lpg0324</name>
</gene>
<sequence length="126" mass="14071">MATINQLVRKPRVDVKKKSNVPALESCPQRRGVCTRVYTTTPKKPNSAMRKVARVRLTNGFEVTSYIGGEGHNLQEHSVVLIRGGRVKDLPGVRYHTVRGSLDTSGVNDRKQGRSKYGTKKPKDKK</sequence>
<accession>Q5ZYP8</accession>
<protein>
    <recommendedName>
        <fullName evidence="2">Small ribosomal subunit protein uS12</fullName>
    </recommendedName>
    <alternativeName>
        <fullName evidence="4">30S ribosomal protein S12</fullName>
    </alternativeName>
</protein>
<proteinExistence type="inferred from homology"/>
<keyword id="KW-0488">Methylation</keyword>
<keyword id="KW-1185">Reference proteome</keyword>
<keyword id="KW-0687">Ribonucleoprotein</keyword>
<keyword id="KW-0689">Ribosomal protein</keyword>
<keyword id="KW-0694">RNA-binding</keyword>
<keyword id="KW-0699">rRNA-binding</keyword>
<keyword id="KW-0820">tRNA-binding</keyword>
<organism>
    <name type="scientific">Legionella pneumophila subsp. pneumophila (strain Philadelphia 1 / ATCC 33152 / DSM 7513)</name>
    <dbReference type="NCBI Taxonomy" id="272624"/>
    <lineage>
        <taxon>Bacteria</taxon>
        <taxon>Pseudomonadati</taxon>
        <taxon>Pseudomonadota</taxon>
        <taxon>Gammaproteobacteria</taxon>
        <taxon>Legionellales</taxon>
        <taxon>Legionellaceae</taxon>
        <taxon>Legionella</taxon>
    </lineage>
</organism>
<name>RS12_LEGPH</name>
<comment type="function">
    <text evidence="2">With S4 and S5 plays an important role in translational accuracy.</text>
</comment>
<comment type="function">
    <text evidence="2">Interacts with and stabilizes bases of the 16S rRNA that are involved in tRNA selection in the A site and with the mRNA backbone. Located at the interface of the 30S and 50S subunits, it traverses the body of the 30S subunit contacting proteins on the other side and probably holding the rRNA structure together. The combined cluster of proteins S8, S12 and S17 appears to hold together the shoulder and platform of the 30S subunit.</text>
</comment>
<comment type="subunit">
    <text evidence="2">Part of the 30S ribosomal subunit. Contacts proteins S8 and S17. May interact with IF1 in the 30S initiation complex.</text>
</comment>
<comment type="similarity">
    <text evidence="2">Belongs to the universal ribosomal protein uS12 family.</text>
</comment>
<evidence type="ECO:0000250" key="1"/>
<evidence type="ECO:0000255" key="2">
    <source>
        <dbReference type="HAMAP-Rule" id="MF_00403"/>
    </source>
</evidence>
<evidence type="ECO:0000256" key="3">
    <source>
        <dbReference type="SAM" id="MobiDB-lite"/>
    </source>
</evidence>
<evidence type="ECO:0000305" key="4"/>
<dbReference type="EMBL" id="AE017354">
    <property type="protein sequence ID" value="AAU26421.1"/>
    <property type="molecule type" value="Genomic_DNA"/>
</dbReference>
<dbReference type="RefSeq" id="WP_004450478.1">
    <property type="nucleotide sequence ID" value="NC_002942.5"/>
</dbReference>
<dbReference type="RefSeq" id="YP_094368.1">
    <property type="nucleotide sequence ID" value="NC_002942.5"/>
</dbReference>
<dbReference type="SMR" id="Q5ZYP8"/>
<dbReference type="STRING" id="272624.lpg0324"/>
<dbReference type="PaxDb" id="272624-lpg0324"/>
<dbReference type="GeneID" id="57034327"/>
<dbReference type="KEGG" id="lpn:lpg0324"/>
<dbReference type="PATRIC" id="fig|272624.6.peg.331"/>
<dbReference type="eggNOG" id="COG0048">
    <property type="taxonomic scope" value="Bacteria"/>
</dbReference>
<dbReference type="HOGENOM" id="CLU_104295_1_2_6"/>
<dbReference type="OrthoDB" id="9802366at2"/>
<dbReference type="Proteomes" id="UP000000609">
    <property type="component" value="Chromosome"/>
</dbReference>
<dbReference type="GO" id="GO:0015935">
    <property type="term" value="C:small ribosomal subunit"/>
    <property type="evidence" value="ECO:0007669"/>
    <property type="project" value="InterPro"/>
</dbReference>
<dbReference type="GO" id="GO:0019843">
    <property type="term" value="F:rRNA binding"/>
    <property type="evidence" value="ECO:0007669"/>
    <property type="project" value="UniProtKB-UniRule"/>
</dbReference>
<dbReference type="GO" id="GO:0003735">
    <property type="term" value="F:structural constituent of ribosome"/>
    <property type="evidence" value="ECO:0007669"/>
    <property type="project" value="InterPro"/>
</dbReference>
<dbReference type="GO" id="GO:0000049">
    <property type="term" value="F:tRNA binding"/>
    <property type="evidence" value="ECO:0007669"/>
    <property type="project" value="UniProtKB-UniRule"/>
</dbReference>
<dbReference type="GO" id="GO:0006412">
    <property type="term" value="P:translation"/>
    <property type="evidence" value="ECO:0007669"/>
    <property type="project" value="UniProtKB-UniRule"/>
</dbReference>
<dbReference type="CDD" id="cd03368">
    <property type="entry name" value="Ribosomal_S12"/>
    <property type="match status" value="1"/>
</dbReference>
<dbReference type="FunFam" id="2.40.50.140:FF:000001">
    <property type="entry name" value="30S ribosomal protein S12"/>
    <property type="match status" value="1"/>
</dbReference>
<dbReference type="Gene3D" id="2.40.50.140">
    <property type="entry name" value="Nucleic acid-binding proteins"/>
    <property type="match status" value="1"/>
</dbReference>
<dbReference type="HAMAP" id="MF_00403_B">
    <property type="entry name" value="Ribosomal_uS12_B"/>
    <property type="match status" value="1"/>
</dbReference>
<dbReference type="InterPro" id="IPR012340">
    <property type="entry name" value="NA-bd_OB-fold"/>
</dbReference>
<dbReference type="InterPro" id="IPR006032">
    <property type="entry name" value="Ribosomal_uS12"/>
</dbReference>
<dbReference type="InterPro" id="IPR005679">
    <property type="entry name" value="Ribosomal_uS12_bac"/>
</dbReference>
<dbReference type="NCBIfam" id="TIGR00981">
    <property type="entry name" value="rpsL_bact"/>
    <property type="match status" value="1"/>
</dbReference>
<dbReference type="PANTHER" id="PTHR11652">
    <property type="entry name" value="30S RIBOSOMAL PROTEIN S12 FAMILY MEMBER"/>
    <property type="match status" value="1"/>
</dbReference>
<dbReference type="Pfam" id="PF00164">
    <property type="entry name" value="Ribosom_S12_S23"/>
    <property type="match status" value="1"/>
</dbReference>
<dbReference type="PIRSF" id="PIRSF002133">
    <property type="entry name" value="Ribosomal_S12/S23"/>
    <property type="match status" value="1"/>
</dbReference>
<dbReference type="PRINTS" id="PR01034">
    <property type="entry name" value="RIBOSOMALS12"/>
</dbReference>
<dbReference type="SUPFAM" id="SSF50249">
    <property type="entry name" value="Nucleic acid-binding proteins"/>
    <property type="match status" value="1"/>
</dbReference>
<dbReference type="PROSITE" id="PS00055">
    <property type="entry name" value="RIBOSOMAL_S12"/>
    <property type="match status" value="1"/>
</dbReference>
<feature type="chain" id="PRO_0000146242" description="Small ribosomal subunit protein uS12">
    <location>
        <begin position="1"/>
        <end position="126"/>
    </location>
</feature>
<feature type="region of interest" description="Disordered" evidence="3">
    <location>
        <begin position="99"/>
        <end position="126"/>
    </location>
</feature>
<feature type="compositionally biased region" description="Basic residues" evidence="3">
    <location>
        <begin position="113"/>
        <end position="126"/>
    </location>
</feature>
<feature type="modified residue" description="3-methylthioaspartic acid" evidence="1">
    <location>
        <position position="89"/>
    </location>
</feature>